<sequence length="379" mass="42422">MSTNLRKTHPLAKIINSSFIDLPSPSNISAWWNFGSLLGACLILQTTTGIFLAMHYSPDISLAFSSVAHITRDVQYGWLIRNMHANGASLFFMCIYLHIGRGLYYGSYLYKETWYTGTTLLLLTMATAFVGYVLPWGQMSFWGATVITNLLSAIPYIGNTLVQWIWGGFSVDNATLTRFFAFHFLLPFAIMGLTMVHLLFLHETGSNNPTGLNSNTDKIPFHPYFSYKDLLGLTLMLALLLTLTLFSPNLLGDPDNFTPANPLSTPPHIKPEWYFLFAYAILRSIPNKLGGVLALMLSILVLFLMPTLHTSKQRTAQFRPLTQILFWSLIANLLVLTWIGGQPVENPFITIGQMASILHFSILLILMPIAGTIENKMLT</sequence>
<protein>
    <recommendedName>
        <fullName>Cytochrome b</fullName>
    </recommendedName>
    <alternativeName>
        <fullName>Complex III subunit 3</fullName>
    </alternativeName>
    <alternativeName>
        <fullName>Complex III subunit III</fullName>
    </alternativeName>
    <alternativeName>
        <fullName>Cytochrome b-c1 complex subunit 3</fullName>
    </alternativeName>
    <alternativeName>
        <fullName>Ubiquinol-cytochrome-c reductase complex cytochrome b subunit</fullName>
    </alternativeName>
</protein>
<proteinExistence type="inferred from homology"/>
<organism>
    <name type="scientific">Emydoidea blandingii</name>
    <name type="common">Blanding's turtle</name>
    <name type="synonym">Emys blandingii</name>
    <dbReference type="NCBI Taxonomy" id="85613"/>
    <lineage>
        <taxon>Eukaryota</taxon>
        <taxon>Metazoa</taxon>
        <taxon>Chordata</taxon>
        <taxon>Craniata</taxon>
        <taxon>Vertebrata</taxon>
        <taxon>Euteleostomi</taxon>
        <taxon>Archelosauria</taxon>
        <taxon>Testudinata</taxon>
        <taxon>Testudines</taxon>
        <taxon>Cryptodira</taxon>
        <taxon>Durocryptodira</taxon>
        <taxon>Testudinoidea</taxon>
        <taxon>Emydidae</taxon>
        <taxon>Emydoidea</taxon>
    </lineage>
</organism>
<feature type="chain" id="PRO_0000060918" description="Cytochrome b">
    <location>
        <begin position="1"/>
        <end position="379"/>
    </location>
</feature>
<feature type="transmembrane region" description="Helical" evidence="2">
    <location>
        <begin position="34"/>
        <end position="54"/>
    </location>
</feature>
<feature type="transmembrane region" description="Helical" evidence="2">
    <location>
        <begin position="78"/>
        <end position="99"/>
    </location>
</feature>
<feature type="transmembrane region" description="Helical" evidence="2">
    <location>
        <begin position="114"/>
        <end position="134"/>
    </location>
</feature>
<feature type="transmembrane region" description="Helical" evidence="2">
    <location>
        <begin position="179"/>
        <end position="199"/>
    </location>
</feature>
<feature type="transmembrane region" description="Helical" evidence="2">
    <location>
        <begin position="227"/>
        <end position="247"/>
    </location>
</feature>
<feature type="transmembrane region" description="Helical" evidence="2">
    <location>
        <begin position="289"/>
        <end position="309"/>
    </location>
</feature>
<feature type="transmembrane region" description="Helical" evidence="2">
    <location>
        <begin position="321"/>
        <end position="341"/>
    </location>
</feature>
<feature type="transmembrane region" description="Helical" evidence="2">
    <location>
        <begin position="348"/>
        <end position="368"/>
    </location>
</feature>
<feature type="binding site" description="axial binding residue" evidence="2">
    <location>
        <position position="84"/>
    </location>
    <ligand>
        <name>heme b</name>
        <dbReference type="ChEBI" id="CHEBI:60344"/>
        <label>b562</label>
    </ligand>
    <ligandPart>
        <name>Fe</name>
        <dbReference type="ChEBI" id="CHEBI:18248"/>
    </ligandPart>
</feature>
<feature type="binding site" description="axial binding residue" evidence="2">
    <location>
        <position position="98"/>
    </location>
    <ligand>
        <name>heme b</name>
        <dbReference type="ChEBI" id="CHEBI:60344"/>
        <label>b566</label>
    </ligand>
    <ligandPart>
        <name>Fe</name>
        <dbReference type="ChEBI" id="CHEBI:18248"/>
    </ligandPart>
</feature>
<feature type="binding site" description="axial binding residue" evidence="2">
    <location>
        <position position="183"/>
    </location>
    <ligand>
        <name>heme b</name>
        <dbReference type="ChEBI" id="CHEBI:60344"/>
        <label>b562</label>
    </ligand>
    <ligandPart>
        <name>Fe</name>
        <dbReference type="ChEBI" id="CHEBI:18248"/>
    </ligandPart>
</feature>
<feature type="binding site" description="axial binding residue" evidence="2">
    <location>
        <position position="197"/>
    </location>
    <ligand>
        <name>heme b</name>
        <dbReference type="ChEBI" id="CHEBI:60344"/>
        <label>b566</label>
    </ligand>
    <ligandPart>
        <name>Fe</name>
        <dbReference type="ChEBI" id="CHEBI:18248"/>
    </ligandPart>
</feature>
<feature type="binding site" evidence="2">
    <location>
        <position position="202"/>
    </location>
    <ligand>
        <name>a ubiquinone</name>
        <dbReference type="ChEBI" id="CHEBI:16389"/>
    </ligand>
</feature>
<keyword id="KW-0249">Electron transport</keyword>
<keyword id="KW-0349">Heme</keyword>
<keyword id="KW-0408">Iron</keyword>
<keyword id="KW-0472">Membrane</keyword>
<keyword id="KW-0479">Metal-binding</keyword>
<keyword id="KW-0496">Mitochondrion</keyword>
<keyword id="KW-0999">Mitochondrion inner membrane</keyword>
<keyword id="KW-0679">Respiratory chain</keyword>
<keyword id="KW-0812">Transmembrane</keyword>
<keyword id="KW-1133">Transmembrane helix</keyword>
<keyword id="KW-0813">Transport</keyword>
<keyword id="KW-0830">Ubiquinone</keyword>
<reference key="1">
    <citation type="journal article" date="2002" name="Mol. Phylogenet. Evol.">
        <title>Molecular phylogenetics of emydine turtles: taxonomic revision and the evolution of shell kinesis.</title>
        <authorList>
            <person name="Feldman C.R."/>
            <person name="Parham J.F."/>
        </authorList>
    </citation>
    <scope>NUCLEOTIDE SEQUENCE [GENOMIC DNA]</scope>
    <source>
        <strain>Isolate ROM 20922</strain>
    </source>
</reference>
<name>CYB_EMYBL</name>
<geneLocation type="mitochondrion"/>
<gene>
    <name type="primary">MT-CYB</name>
    <name type="synonym">COB</name>
    <name type="synonym">CYTB</name>
    <name type="synonym">MTCYB</name>
</gene>
<comment type="function">
    <text evidence="2">Component of the ubiquinol-cytochrome c reductase complex (complex III or cytochrome b-c1 complex) that is part of the mitochondrial respiratory chain. The b-c1 complex mediates electron transfer from ubiquinol to cytochrome c. Contributes to the generation of a proton gradient across the mitochondrial membrane that is then used for ATP synthesis.</text>
</comment>
<comment type="cofactor">
    <cofactor evidence="2">
        <name>heme b</name>
        <dbReference type="ChEBI" id="CHEBI:60344"/>
    </cofactor>
    <text evidence="2">Binds 2 heme b groups non-covalently.</text>
</comment>
<comment type="subunit">
    <text evidence="2">The cytochrome bc1 complex contains 3 respiratory subunits (MT-CYB, CYC1 and UQCRFS1), 2 core proteins (UQCRC1 and UQCRC2) and probably 6 low-molecular weight proteins.</text>
</comment>
<comment type="subcellular location">
    <subcellularLocation>
        <location evidence="2">Mitochondrion inner membrane</location>
        <topology evidence="2">Multi-pass membrane protein</topology>
    </subcellularLocation>
</comment>
<comment type="miscellaneous">
    <text evidence="1">Heme 1 (or BL or b562) is low-potential and absorbs at about 562 nm, and heme 2 (or BH or b566) is high-potential and absorbs at about 566 nm.</text>
</comment>
<comment type="similarity">
    <text evidence="3 4">Belongs to the cytochrome b family.</text>
</comment>
<comment type="caution">
    <text evidence="2">The full-length protein contains only eight transmembrane helices, not nine as predicted by bioinformatics tools.</text>
</comment>
<dbReference type="EMBL" id="AF258869">
    <property type="protein sequence ID" value="AAL74305.1"/>
    <property type="molecule type" value="Genomic_DNA"/>
</dbReference>
<dbReference type="SMR" id="Q8SJL1"/>
<dbReference type="GO" id="GO:0005743">
    <property type="term" value="C:mitochondrial inner membrane"/>
    <property type="evidence" value="ECO:0007669"/>
    <property type="project" value="UniProtKB-SubCell"/>
</dbReference>
<dbReference type="GO" id="GO:0045275">
    <property type="term" value="C:respiratory chain complex III"/>
    <property type="evidence" value="ECO:0007669"/>
    <property type="project" value="InterPro"/>
</dbReference>
<dbReference type="GO" id="GO:0046872">
    <property type="term" value="F:metal ion binding"/>
    <property type="evidence" value="ECO:0007669"/>
    <property type="project" value="UniProtKB-KW"/>
</dbReference>
<dbReference type="GO" id="GO:0008121">
    <property type="term" value="F:ubiquinol-cytochrome-c reductase activity"/>
    <property type="evidence" value="ECO:0007669"/>
    <property type="project" value="InterPro"/>
</dbReference>
<dbReference type="GO" id="GO:0006122">
    <property type="term" value="P:mitochondrial electron transport, ubiquinol to cytochrome c"/>
    <property type="evidence" value="ECO:0007669"/>
    <property type="project" value="TreeGrafter"/>
</dbReference>
<dbReference type="CDD" id="cd00290">
    <property type="entry name" value="cytochrome_b_C"/>
    <property type="match status" value="1"/>
</dbReference>
<dbReference type="CDD" id="cd00284">
    <property type="entry name" value="Cytochrome_b_N"/>
    <property type="match status" value="1"/>
</dbReference>
<dbReference type="FunFam" id="1.20.810.10:FF:000002">
    <property type="entry name" value="Cytochrome b"/>
    <property type="match status" value="1"/>
</dbReference>
<dbReference type="Gene3D" id="1.20.810.10">
    <property type="entry name" value="Cytochrome Bc1 Complex, Chain C"/>
    <property type="match status" value="1"/>
</dbReference>
<dbReference type="InterPro" id="IPR005798">
    <property type="entry name" value="Cyt_b/b6_C"/>
</dbReference>
<dbReference type="InterPro" id="IPR036150">
    <property type="entry name" value="Cyt_b/b6_C_sf"/>
</dbReference>
<dbReference type="InterPro" id="IPR005797">
    <property type="entry name" value="Cyt_b/b6_N"/>
</dbReference>
<dbReference type="InterPro" id="IPR027387">
    <property type="entry name" value="Cytb/b6-like_sf"/>
</dbReference>
<dbReference type="InterPro" id="IPR030689">
    <property type="entry name" value="Cytochrome_b"/>
</dbReference>
<dbReference type="InterPro" id="IPR048260">
    <property type="entry name" value="Cytochrome_b_C_euk/bac"/>
</dbReference>
<dbReference type="InterPro" id="IPR048259">
    <property type="entry name" value="Cytochrome_b_N_euk/bac"/>
</dbReference>
<dbReference type="InterPro" id="IPR016174">
    <property type="entry name" value="Di-haem_cyt_TM"/>
</dbReference>
<dbReference type="PANTHER" id="PTHR19271">
    <property type="entry name" value="CYTOCHROME B"/>
    <property type="match status" value="1"/>
</dbReference>
<dbReference type="PANTHER" id="PTHR19271:SF16">
    <property type="entry name" value="CYTOCHROME B"/>
    <property type="match status" value="1"/>
</dbReference>
<dbReference type="Pfam" id="PF00032">
    <property type="entry name" value="Cytochrom_B_C"/>
    <property type="match status" value="1"/>
</dbReference>
<dbReference type="Pfam" id="PF00033">
    <property type="entry name" value="Cytochrome_B"/>
    <property type="match status" value="1"/>
</dbReference>
<dbReference type="PIRSF" id="PIRSF038885">
    <property type="entry name" value="COB"/>
    <property type="match status" value="1"/>
</dbReference>
<dbReference type="SUPFAM" id="SSF81648">
    <property type="entry name" value="a domain/subunit of cytochrome bc1 complex (Ubiquinol-cytochrome c reductase)"/>
    <property type="match status" value="1"/>
</dbReference>
<dbReference type="SUPFAM" id="SSF81342">
    <property type="entry name" value="Transmembrane di-heme cytochromes"/>
    <property type="match status" value="1"/>
</dbReference>
<dbReference type="PROSITE" id="PS51003">
    <property type="entry name" value="CYTB_CTER"/>
    <property type="match status" value="1"/>
</dbReference>
<dbReference type="PROSITE" id="PS51002">
    <property type="entry name" value="CYTB_NTER"/>
    <property type="match status" value="1"/>
</dbReference>
<accession>Q8SJL1</accession>
<evidence type="ECO:0000250" key="1"/>
<evidence type="ECO:0000250" key="2">
    <source>
        <dbReference type="UniProtKB" id="P00157"/>
    </source>
</evidence>
<evidence type="ECO:0000255" key="3">
    <source>
        <dbReference type="PROSITE-ProRule" id="PRU00967"/>
    </source>
</evidence>
<evidence type="ECO:0000255" key="4">
    <source>
        <dbReference type="PROSITE-ProRule" id="PRU00968"/>
    </source>
</evidence>